<evidence type="ECO:0000255" key="1">
    <source>
        <dbReference type="HAMAP-Rule" id="MF_01306"/>
    </source>
</evidence>
<evidence type="ECO:0000256" key="2">
    <source>
        <dbReference type="SAM" id="MobiDB-lite"/>
    </source>
</evidence>
<evidence type="ECO:0000305" key="3"/>
<feature type="chain" id="PRO_1000214279" description="Small ribosomal subunit protein uS4">
    <location>
        <begin position="1"/>
        <end position="208"/>
    </location>
</feature>
<feature type="domain" description="S4 RNA-binding" evidence="1">
    <location>
        <begin position="95"/>
        <end position="159"/>
    </location>
</feature>
<feature type="region of interest" description="Disordered" evidence="2">
    <location>
        <begin position="28"/>
        <end position="48"/>
    </location>
</feature>
<protein>
    <recommendedName>
        <fullName evidence="1">Small ribosomal subunit protein uS4</fullName>
    </recommendedName>
    <alternativeName>
        <fullName evidence="3">30S ribosomal protein S4</fullName>
    </alternativeName>
</protein>
<proteinExistence type="inferred from homology"/>
<keyword id="KW-1185">Reference proteome</keyword>
<keyword id="KW-0687">Ribonucleoprotein</keyword>
<keyword id="KW-0689">Ribosomal protein</keyword>
<keyword id="KW-0694">RNA-binding</keyword>
<keyword id="KW-0699">rRNA-binding</keyword>
<name>RS4_BEUC1</name>
<dbReference type="EMBL" id="CP001618">
    <property type="protein sequence ID" value="ACQ80266.1"/>
    <property type="molecule type" value="Genomic_DNA"/>
</dbReference>
<dbReference type="RefSeq" id="WP_015882506.1">
    <property type="nucleotide sequence ID" value="NC_012669.1"/>
</dbReference>
<dbReference type="SMR" id="C5C5S5"/>
<dbReference type="STRING" id="471853.Bcav_2011"/>
<dbReference type="KEGG" id="bcv:Bcav_2011"/>
<dbReference type="eggNOG" id="COG0522">
    <property type="taxonomic scope" value="Bacteria"/>
</dbReference>
<dbReference type="HOGENOM" id="CLU_092403_0_3_11"/>
<dbReference type="OrthoDB" id="9803672at2"/>
<dbReference type="Proteomes" id="UP000007962">
    <property type="component" value="Chromosome"/>
</dbReference>
<dbReference type="GO" id="GO:0015935">
    <property type="term" value="C:small ribosomal subunit"/>
    <property type="evidence" value="ECO:0007669"/>
    <property type="project" value="InterPro"/>
</dbReference>
<dbReference type="GO" id="GO:0019843">
    <property type="term" value="F:rRNA binding"/>
    <property type="evidence" value="ECO:0007669"/>
    <property type="project" value="UniProtKB-UniRule"/>
</dbReference>
<dbReference type="GO" id="GO:0003735">
    <property type="term" value="F:structural constituent of ribosome"/>
    <property type="evidence" value="ECO:0007669"/>
    <property type="project" value="InterPro"/>
</dbReference>
<dbReference type="GO" id="GO:0042274">
    <property type="term" value="P:ribosomal small subunit biogenesis"/>
    <property type="evidence" value="ECO:0007669"/>
    <property type="project" value="TreeGrafter"/>
</dbReference>
<dbReference type="GO" id="GO:0006412">
    <property type="term" value="P:translation"/>
    <property type="evidence" value="ECO:0007669"/>
    <property type="project" value="UniProtKB-UniRule"/>
</dbReference>
<dbReference type="CDD" id="cd00165">
    <property type="entry name" value="S4"/>
    <property type="match status" value="1"/>
</dbReference>
<dbReference type="FunFam" id="3.10.290.10:FF:000001">
    <property type="entry name" value="30S ribosomal protein S4"/>
    <property type="match status" value="1"/>
</dbReference>
<dbReference type="Gene3D" id="1.10.1050.10">
    <property type="entry name" value="Ribosomal Protein S4 Delta 41, Chain A, domain 1"/>
    <property type="match status" value="1"/>
</dbReference>
<dbReference type="Gene3D" id="3.10.290.10">
    <property type="entry name" value="RNA-binding S4 domain"/>
    <property type="match status" value="1"/>
</dbReference>
<dbReference type="HAMAP" id="MF_01306_B">
    <property type="entry name" value="Ribosomal_uS4_B"/>
    <property type="match status" value="1"/>
</dbReference>
<dbReference type="InterPro" id="IPR022801">
    <property type="entry name" value="Ribosomal_uS4"/>
</dbReference>
<dbReference type="InterPro" id="IPR005709">
    <property type="entry name" value="Ribosomal_uS4_bac-type"/>
</dbReference>
<dbReference type="InterPro" id="IPR001912">
    <property type="entry name" value="Ribosomal_uS4_N"/>
</dbReference>
<dbReference type="InterPro" id="IPR002942">
    <property type="entry name" value="S4_RNA-bd"/>
</dbReference>
<dbReference type="InterPro" id="IPR036986">
    <property type="entry name" value="S4_RNA-bd_sf"/>
</dbReference>
<dbReference type="NCBIfam" id="NF003717">
    <property type="entry name" value="PRK05327.1"/>
    <property type="match status" value="1"/>
</dbReference>
<dbReference type="NCBIfam" id="TIGR01017">
    <property type="entry name" value="rpsD_bact"/>
    <property type="match status" value="1"/>
</dbReference>
<dbReference type="PANTHER" id="PTHR11831">
    <property type="entry name" value="30S 40S RIBOSOMAL PROTEIN"/>
    <property type="match status" value="1"/>
</dbReference>
<dbReference type="PANTHER" id="PTHR11831:SF4">
    <property type="entry name" value="SMALL RIBOSOMAL SUBUNIT PROTEIN US4M"/>
    <property type="match status" value="1"/>
</dbReference>
<dbReference type="Pfam" id="PF00163">
    <property type="entry name" value="Ribosomal_S4"/>
    <property type="match status" value="1"/>
</dbReference>
<dbReference type="Pfam" id="PF01479">
    <property type="entry name" value="S4"/>
    <property type="match status" value="1"/>
</dbReference>
<dbReference type="SMART" id="SM01390">
    <property type="entry name" value="Ribosomal_S4"/>
    <property type="match status" value="1"/>
</dbReference>
<dbReference type="SMART" id="SM00363">
    <property type="entry name" value="S4"/>
    <property type="match status" value="1"/>
</dbReference>
<dbReference type="SUPFAM" id="SSF55174">
    <property type="entry name" value="Alpha-L RNA-binding motif"/>
    <property type="match status" value="1"/>
</dbReference>
<dbReference type="PROSITE" id="PS50889">
    <property type="entry name" value="S4"/>
    <property type="match status" value="1"/>
</dbReference>
<accession>C5C5S5</accession>
<comment type="function">
    <text evidence="1">One of the primary rRNA binding proteins, it binds directly to 16S rRNA where it nucleates assembly of the body of the 30S subunit.</text>
</comment>
<comment type="function">
    <text evidence="1">With S5 and S12 plays an important role in translational accuracy.</text>
</comment>
<comment type="subunit">
    <text evidence="1">Part of the 30S ribosomal subunit. Contacts protein S5. The interaction surface between S4 and S5 is involved in control of translational fidelity.</text>
</comment>
<comment type="similarity">
    <text evidence="1">Belongs to the universal ribosomal protein uS4 family.</text>
</comment>
<gene>
    <name evidence="1" type="primary">rpsD</name>
    <name type="ordered locus">Bcav_2011</name>
</gene>
<organism>
    <name type="scientific">Beutenbergia cavernae (strain ATCC BAA-8 / DSM 12333 / CCUG 43141 / JCM 11478 / NBRC 16432 / NCIMB 13614 / HKI 0122)</name>
    <dbReference type="NCBI Taxonomy" id="471853"/>
    <lineage>
        <taxon>Bacteria</taxon>
        <taxon>Bacillati</taxon>
        <taxon>Actinomycetota</taxon>
        <taxon>Actinomycetes</taxon>
        <taxon>Micrococcales</taxon>
        <taxon>Beutenbergiaceae</taxon>
        <taxon>Beutenbergia</taxon>
    </lineage>
</organism>
<sequence length="208" mass="23746">MSSTKRARNQVRLSRALGLPLTPKAAKYFEKRPYPPGEHGRARRRTESDYAVRLKEKQRLRAQYGIREAQLRRAFDEARREAGLTGEALVELLEMRLDALVLRSGFARTIAQARQAVVHRHVLVDGKIVDRPSFRVKPGQVIQVKPRSQARTPFQVAAAGAHRDVLAQVPEYLDVSLEKLRSELVRRPKRAEVPVTADVQLIVEWYAR</sequence>
<reference key="1">
    <citation type="journal article" date="2009" name="Stand. Genomic Sci.">
        <title>Complete genome sequence of Beutenbergia cavernae type strain (HKI 0122).</title>
        <authorList>
            <person name="Land M."/>
            <person name="Pukall R."/>
            <person name="Abt B."/>
            <person name="Goker M."/>
            <person name="Rohde M."/>
            <person name="Glavina Del Rio T."/>
            <person name="Tice H."/>
            <person name="Copeland A."/>
            <person name="Cheng J.F."/>
            <person name="Lucas S."/>
            <person name="Chen F."/>
            <person name="Nolan M."/>
            <person name="Bruce D."/>
            <person name="Goodwin L."/>
            <person name="Pitluck S."/>
            <person name="Ivanova N."/>
            <person name="Mavromatis K."/>
            <person name="Ovchinnikova G."/>
            <person name="Pati A."/>
            <person name="Chen A."/>
            <person name="Palaniappan K."/>
            <person name="Hauser L."/>
            <person name="Chang Y.J."/>
            <person name="Jefferies C.C."/>
            <person name="Saunders E."/>
            <person name="Brettin T."/>
            <person name="Detter J.C."/>
            <person name="Han C."/>
            <person name="Chain P."/>
            <person name="Bristow J."/>
            <person name="Eisen J.A."/>
            <person name="Markowitz V."/>
            <person name="Hugenholtz P."/>
            <person name="Kyrpides N.C."/>
            <person name="Klenk H.P."/>
            <person name="Lapidus A."/>
        </authorList>
    </citation>
    <scope>NUCLEOTIDE SEQUENCE [LARGE SCALE GENOMIC DNA]</scope>
    <source>
        <strain>ATCC BAA-8 / DSM 12333 / CCUG 43141 / JCM 11478 / NBRC 16432 / NCIMB 13614 / HKI 0122</strain>
    </source>
</reference>